<name>ASSY_GEODF</name>
<reference key="1">
    <citation type="submission" date="2009-01" db="EMBL/GenBank/DDBJ databases">
        <title>Complete sequence of Geobacter sp. FRC-32.</title>
        <authorList>
            <consortium name="US DOE Joint Genome Institute"/>
            <person name="Lucas S."/>
            <person name="Copeland A."/>
            <person name="Lapidus A."/>
            <person name="Glavina del Rio T."/>
            <person name="Dalin E."/>
            <person name="Tice H."/>
            <person name="Bruce D."/>
            <person name="Goodwin L."/>
            <person name="Pitluck S."/>
            <person name="Saunders E."/>
            <person name="Brettin T."/>
            <person name="Detter J.C."/>
            <person name="Han C."/>
            <person name="Larimer F."/>
            <person name="Land M."/>
            <person name="Hauser L."/>
            <person name="Kyrpides N."/>
            <person name="Ovchinnikova G."/>
            <person name="Kostka J."/>
            <person name="Richardson P."/>
        </authorList>
    </citation>
    <scope>NUCLEOTIDE SEQUENCE [LARGE SCALE GENOMIC DNA]</scope>
    <source>
        <strain>DSM 22248 / JCM 15807 / FRC-32</strain>
    </source>
</reference>
<accession>B9M374</accession>
<gene>
    <name evidence="1" type="primary">argG</name>
    <name type="ordered locus">Geob_1124</name>
</gene>
<dbReference type="EC" id="6.3.4.5" evidence="1"/>
<dbReference type="EMBL" id="CP001390">
    <property type="protein sequence ID" value="ACM19484.1"/>
    <property type="molecule type" value="Genomic_DNA"/>
</dbReference>
<dbReference type="RefSeq" id="WP_012646213.1">
    <property type="nucleotide sequence ID" value="NC_011979.1"/>
</dbReference>
<dbReference type="SMR" id="B9M374"/>
<dbReference type="STRING" id="316067.Geob_1124"/>
<dbReference type="KEGG" id="geo:Geob_1124"/>
<dbReference type="eggNOG" id="COG0137">
    <property type="taxonomic scope" value="Bacteria"/>
</dbReference>
<dbReference type="HOGENOM" id="CLU_032784_4_2_7"/>
<dbReference type="OrthoDB" id="9801641at2"/>
<dbReference type="UniPathway" id="UPA00068">
    <property type="reaction ID" value="UER00113"/>
</dbReference>
<dbReference type="Proteomes" id="UP000007721">
    <property type="component" value="Chromosome"/>
</dbReference>
<dbReference type="GO" id="GO:0005737">
    <property type="term" value="C:cytoplasm"/>
    <property type="evidence" value="ECO:0007669"/>
    <property type="project" value="UniProtKB-SubCell"/>
</dbReference>
<dbReference type="GO" id="GO:0004055">
    <property type="term" value="F:argininosuccinate synthase activity"/>
    <property type="evidence" value="ECO:0007669"/>
    <property type="project" value="UniProtKB-UniRule"/>
</dbReference>
<dbReference type="GO" id="GO:0005524">
    <property type="term" value="F:ATP binding"/>
    <property type="evidence" value="ECO:0007669"/>
    <property type="project" value="UniProtKB-UniRule"/>
</dbReference>
<dbReference type="GO" id="GO:0000053">
    <property type="term" value="P:argininosuccinate metabolic process"/>
    <property type="evidence" value="ECO:0007669"/>
    <property type="project" value="TreeGrafter"/>
</dbReference>
<dbReference type="GO" id="GO:0006526">
    <property type="term" value="P:L-arginine biosynthetic process"/>
    <property type="evidence" value="ECO:0007669"/>
    <property type="project" value="UniProtKB-UniRule"/>
</dbReference>
<dbReference type="GO" id="GO:0000050">
    <property type="term" value="P:urea cycle"/>
    <property type="evidence" value="ECO:0007669"/>
    <property type="project" value="TreeGrafter"/>
</dbReference>
<dbReference type="CDD" id="cd01999">
    <property type="entry name" value="ASS"/>
    <property type="match status" value="1"/>
</dbReference>
<dbReference type="FunFam" id="3.40.50.620:FF:000019">
    <property type="entry name" value="Argininosuccinate synthase"/>
    <property type="match status" value="1"/>
</dbReference>
<dbReference type="FunFam" id="3.90.1260.10:FF:000007">
    <property type="entry name" value="Argininosuccinate synthase"/>
    <property type="match status" value="1"/>
</dbReference>
<dbReference type="Gene3D" id="3.90.1260.10">
    <property type="entry name" value="Argininosuccinate synthetase, chain A, domain 2"/>
    <property type="match status" value="1"/>
</dbReference>
<dbReference type="Gene3D" id="3.40.50.620">
    <property type="entry name" value="HUPs"/>
    <property type="match status" value="1"/>
</dbReference>
<dbReference type="Gene3D" id="1.20.5.470">
    <property type="entry name" value="Single helix bin"/>
    <property type="match status" value="1"/>
</dbReference>
<dbReference type="HAMAP" id="MF_00005">
    <property type="entry name" value="Arg_succ_synth_type1"/>
    <property type="match status" value="1"/>
</dbReference>
<dbReference type="InterPro" id="IPR048268">
    <property type="entry name" value="Arginosuc_syn_C"/>
</dbReference>
<dbReference type="InterPro" id="IPR048267">
    <property type="entry name" value="Arginosuc_syn_N"/>
</dbReference>
<dbReference type="InterPro" id="IPR001518">
    <property type="entry name" value="Arginosuc_synth"/>
</dbReference>
<dbReference type="InterPro" id="IPR018223">
    <property type="entry name" value="Arginosuc_synth_CS"/>
</dbReference>
<dbReference type="InterPro" id="IPR023434">
    <property type="entry name" value="Arginosuc_synth_type_1_subfam"/>
</dbReference>
<dbReference type="InterPro" id="IPR024074">
    <property type="entry name" value="AS_cat/multimer_dom_body"/>
</dbReference>
<dbReference type="InterPro" id="IPR014729">
    <property type="entry name" value="Rossmann-like_a/b/a_fold"/>
</dbReference>
<dbReference type="NCBIfam" id="TIGR00032">
    <property type="entry name" value="argG"/>
    <property type="match status" value="1"/>
</dbReference>
<dbReference type="NCBIfam" id="NF001770">
    <property type="entry name" value="PRK00509.1"/>
    <property type="match status" value="1"/>
</dbReference>
<dbReference type="PANTHER" id="PTHR11587">
    <property type="entry name" value="ARGININOSUCCINATE SYNTHASE"/>
    <property type="match status" value="1"/>
</dbReference>
<dbReference type="PANTHER" id="PTHR11587:SF2">
    <property type="entry name" value="ARGININOSUCCINATE SYNTHASE"/>
    <property type="match status" value="1"/>
</dbReference>
<dbReference type="Pfam" id="PF20979">
    <property type="entry name" value="Arginosuc_syn_C"/>
    <property type="match status" value="1"/>
</dbReference>
<dbReference type="Pfam" id="PF00764">
    <property type="entry name" value="Arginosuc_synth"/>
    <property type="match status" value="1"/>
</dbReference>
<dbReference type="SUPFAM" id="SSF52402">
    <property type="entry name" value="Adenine nucleotide alpha hydrolases-like"/>
    <property type="match status" value="1"/>
</dbReference>
<dbReference type="SUPFAM" id="SSF69864">
    <property type="entry name" value="Argininosuccinate synthetase, C-terminal domain"/>
    <property type="match status" value="1"/>
</dbReference>
<dbReference type="PROSITE" id="PS00564">
    <property type="entry name" value="ARGININOSUCCIN_SYN_1"/>
    <property type="match status" value="1"/>
</dbReference>
<dbReference type="PROSITE" id="PS00565">
    <property type="entry name" value="ARGININOSUCCIN_SYN_2"/>
    <property type="match status" value="1"/>
</dbReference>
<evidence type="ECO:0000255" key="1">
    <source>
        <dbReference type="HAMAP-Rule" id="MF_00005"/>
    </source>
</evidence>
<comment type="catalytic activity">
    <reaction evidence="1">
        <text>L-citrulline + L-aspartate + ATP = 2-(N(omega)-L-arginino)succinate + AMP + diphosphate + H(+)</text>
        <dbReference type="Rhea" id="RHEA:10932"/>
        <dbReference type="ChEBI" id="CHEBI:15378"/>
        <dbReference type="ChEBI" id="CHEBI:29991"/>
        <dbReference type="ChEBI" id="CHEBI:30616"/>
        <dbReference type="ChEBI" id="CHEBI:33019"/>
        <dbReference type="ChEBI" id="CHEBI:57472"/>
        <dbReference type="ChEBI" id="CHEBI:57743"/>
        <dbReference type="ChEBI" id="CHEBI:456215"/>
        <dbReference type="EC" id="6.3.4.5"/>
    </reaction>
</comment>
<comment type="pathway">
    <text evidence="1">Amino-acid biosynthesis; L-arginine biosynthesis; L-arginine from L-ornithine and carbamoyl phosphate: step 2/3.</text>
</comment>
<comment type="subunit">
    <text evidence="1">Homotetramer.</text>
</comment>
<comment type="subcellular location">
    <subcellularLocation>
        <location evidence="1">Cytoplasm</location>
    </subcellularLocation>
</comment>
<comment type="similarity">
    <text evidence="1">Belongs to the argininosuccinate synthase family. Type 1 subfamily.</text>
</comment>
<organism>
    <name type="scientific">Geotalea daltonii (strain DSM 22248 / JCM 15807 / FRC-32)</name>
    <name type="common">Geobacter daltonii</name>
    <dbReference type="NCBI Taxonomy" id="316067"/>
    <lineage>
        <taxon>Bacteria</taxon>
        <taxon>Pseudomonadati</taxon>
        <taxon>Thermodesulfobacteriota</taxon>
        <taxon>Desulfuromonadia</taxon>
        <taxon>Geobacterales</taxon>
        <taxon>Geobacteraceae</taxon>
        <taxon>Geotalea</taxon>
    </lineage>
</organism>
<keyword id="KW-0028">Amino-acid biosynthesis</keyword>
<keyword id="KW-0055">Arginine biosynthesis</keyword>
<keyword id="KW-0067">ATP-binding</keyword>
<keyword id="KW-0963">Cytoplasm</keyword>
<keyword id="KW-0436">Ligase</keyword>
<keyword id="KW-0547">Nucleotide-binding</keyword>
<keyword id="KW-1185">Reference proteome</keyword>
<protein>
    <recommendedName>
        <fullName evidence="1">Argininosuccinate synthase</fullName>
        <ecNumber evidence="1">6.3.4.5</ecNumber>
    </recommendedName>
    <alternativeName>
        <fullName evidence="1">Citrulline--aspartate ligase</fullName>
    </alternativeName>
</protein>
<feature type="chain" id="PRO_1000191894" description="Argininosuccinate synthase">
    <location>
        <begin position="1"/>
        <end position="406"/>
    </location>
</feature>
<feature type="binding site" evidence="1">
    <location>
        <begin position="12"/>
        <end position="20"/>
    </location>
    <ligand>
        <name>ATP</name>
        <dbReference type="ChEBI" id="CHEBI:30616"/>
    </ligand>
</feature>
<feature type="binding site" evidence="1">
    <location>
        <position position="39"/>
    </location>
    <ligand>
        <name>ATP</name>
        <dbReference type="ChEBI" id="CHEBI:30616"/>
    </ligand>
</feature>
<feature type="binding site" evidence="1">
    <location>
        <position position="90"/>
    </location>
    <ligand>
        <name>L-citrulline</name>
        <dbReference type="ChEBI" id="CHEBI:57743"/>
    </ligand>
</feature>
<feature type="binding site" evidence="1">
    <location>
        <position position="95"/>
    </location>
    <ligand>
        <name>L-citrulline</name>
        <dbReference type="ChEBI" id="CHEBI:57743"/>
    </ligand>
</feature>
<feature type="binding site" evidence="1">
    <location>
        <position position="120"/>
    </location>
    <ligand>
        <name>ATP</name>
        <dbReference type="ChEBI" id="CHEBI:30616"/>
    </ligand>
</feature>
<feature type="binding site" evidence="1">
    <location>
        <position position="122"/>
    </location>
    <ligand>
        <name>L-aspartate</name>
        <dbReference type="ChEBI" id="CHEBI:29991"/>
    </ligand>
</feature>
<feature type="binding site" evidence="1">
    <location>
        <position position="126"/>
    </location>
    <ligand>
        <name>L-aspartate</name>
        <dbReference type="ChEBI" id="CHEBI:29991"/>
    </ligand>
</feature>
<feature type="binding site" evidence="1">
    <location>
        <position position="126"/>
    </location>
    <ligand>
        <name>L-citrulline</name>
        <dbReference type="ChEBI" id="CHEBI:57743"/>
    </ligand>
</feature>
<feature type="binding site" evidence="1">
    <location>
        <position position="127"/>
    </location>
    <ligand>
        <name>L-aspartate</name>
        <dbReference type="ChEBI" id="CHEBI:29991"/>
    </ligand>
</feature>
<feature type="binding site" evidence="1">
    <location>
        <position position="130"/>
    </location>
    <ligand>
        <name>L-citrulline</name>
        <dbReference type="ChEBI" id="CHEBI:57743"/>
    </ligand>
</feature>
<feature type="binding site" evidence="1">
    <location>
        <position position="179"/>
    </location>
    <ligand>
        <name>L-citrulline</name>
        <dbReference type="ChEBI" id="CHEBI:57743"/>
    </ligand>
</feature>
<feature type="binding site" evidence="1">
    <location>
        <position position="188"/>
    </location>
    <ligand>
        <name>L-citrulline</name>
        <dbReference type="ChEBI" id="CHEBI:57743"/>
    </ligand>
</feature>
<feature type="binding site" evidence="1">
    <location>
        <position position="264"/>
    </location>
    <ligand>
        <name>L-citrulline</name>
        <dbReference type="ChEBI" id="CHEBI:57743"/>
    </ligand>
</feature>
<feature type="binding site" evidence="1">
    <location>
        <position position="276"/>
    </location>
    <ligand>
        <name>L-citrulline</name>
        <dbReference type="ChEBI" id="CHEBI:57743"/>
    </ligand>
</feature>
<proteinExistence type="inferred from homology"/>
<sequence length="406" mass="45883">MAKQEVKKIVLAYSGGLDTSIILKWLKNEYGCEVITFSADLGQGDELAPIREKAFATGADKVYIDDLKEEFVRDFVYPMFRANAIYEGHYLLGTSIARPLIAKRQMEIAKIEGADAVSHGATGKGNDQVRFELGYYHFNPAITVIAPWRDWKLNSRQALVNYAKKNDIPIPVTKKRPWSSDRNLLHISFEGAILEDTWAEAPENMYVLTKAPEKAPNKPQYVEIEFKNGNAVAVDGEKMSPAQLLAHLNFIGGEHGIGRVDLLENRSVGMKSRGVYETPGGTILREAHMAVEQITMDREVMHLRDSLVPRYAEMVYNGYWFSPEREMLQALIDESQKTVNGVARVKLYKGHCRTVGRKSETDSLFNLDFATFEKDQVYNQKDAEGFIKLNSLRLRIRSLQAAAKKK</sequence>